<proteinExistence type="evidence at transcript level"/>
<feature type="chain" id="PRO_0000294339" description="N-alpha-acetyltransferase 25, NatB auxiliary subunit">
    <location>
        <begin position="1"/>
        <end position="970"/>
    </location>
</feature>
<feature type="repeat" description="TPR 1">
    <location>
        <begin position="11"/>
        <end position="44"/>
    </location>
</feature>
<feature type="repeat" description="TPR 2">
    <location>
        <begin position="45"/>
        <end position="78"/>
    </location>
</feature>
<feature type="repeat" description="TPR 3">
    <location>
        <begin position="79"/>
        <end position="112"/>
    </location>
</feature>
<feature type="repeat" description="TPR 4">
    <location>
        <begin position="114"/>
        <end position="146"/>
    </location>
</feature>
<evidence type="ECO:0000250" key="1">
    <source>
        <dbReference type="UniProtKB" id="Q14CX7"/>
    </source>
</evidence>
<evidence type="ECO:0000305" key="2"/>
<reference key="1">
    <citation type="submission" date="2004-02" db="EMBL/GenBank/DDBJ databases">
        <title>Liver regeneration after PH.</title>
        <authorList>
            <person name="Xu C.S."/>
            <person name="Zhang L."/>
            <person name="Chang C.F."/>
            <person name="Han H.P."/>
            <person name="Wang G.P."/>
            <person name="Chai L.Q."/>
            <person name="Yuan J.Y."/>
            <person name="Yang K.J."/>
            <person name="Zhao L.F."/>
            <person name="Ma H."/>
            <person name="Wang L."/>
            <person name="Wang S.F."/>
            <person name="Xing X.K."/>
            <person name="Shen G.M."/>
            <person name="Shi J.B."/>
            <person name="Rahman S."/>
            <person name="Wang Q.N."/>
            <person name="Zhang J.B."/>
        </authorList>
    </citation>
    <scope>NUCLEOTIDE SEQUENCE [LARGE SCALE MRNA]</scope>
</reference>
<accession>Q6QI44</accession>
<dbReference type="EMBL" id="AY539915">
    <property type="protein sequence ID" value="AAS66255.1"/>
    <property type="molecule type" value="mRNA"/>
</dbReference>
<dbReference type="RefSeq" id="NP_001041365.1">
    <property type="nucleotide sequence ID" value="NM_001047900.1"/>
</dbReference>
<dbReference type="SMR" id="Q6QI44"/>
<dbReference type="FunCoup" id="Q6QI44">
    <property type="interactions" value="4303"/>
</dbReference>
<dbReference type="STRING" id="10116.ENSRNOP00000075085"/>
<dbReference type="PhosphoSitePlus" id="Q6QI44"/>
<dbReference type="jPOST" id="Q6QI44"/>
<dbReference type="PaxDb" id="10116-ENSRNOP00000049175"/>
<dbReference type="Ensembl" id="ENSRNOT00000048984.3">
    <property type="protein sequence ID" value="ENSRNOP00000049175.1"/>
    <property type="gene ID" value="ENSRNOG00000001350.7"/>
</dbReference>
<dbReference type="AGR" id="RGD:1305685"/>
<dbReference type="RGD" id="1305685">
    <property type="gene designation" value="Naa25"/>
</dbReference>
<dbReference type="eggNOG" id="KOG2053">
    <property type="taxonomic scope" value="Eukaryota"/>
</dbReference>
<dbReference type="GeneTree" id="ENSGT00950000183174"/>
<dbReference type="InParanoid" id="Q6QI44"/>
<dbReference type="OrthoDB" id="1874341at2759"/>
<dbReference type="PhylomeDB" id="Q6QI44"/>
<dbReference type="PRO" id="PR:Q6QI44"/>
<dbReference type="Proteomes" id="UP000002494">
    <property type="component" value="Chromosome 12"/>
</dbReference>
<dbReference type="Bgee" id="ENSRNOG00000001350">
    <property type="expression patterns" value="Expressed in skeletal muscle tissue and 20 other cell types or tissues"/>
</dbReference>
<dbReference type="ExpressionAtlas" id="Q6QI44">
    <property type="expression patterns" value="baseline and differential"/>
</dbReference>
<dbReference type="GO" id="GO:0005737">
    <property type="term" value="C:cytoplasm"/>
    <property type="evidence" value="ECO:0000314"/>
    <property type="project" value="MGI"/>
</dbReference>
<dbReference type="GO" id="GO:0031416">
    <property type="term" value="C:NatB complex"/>
    <property type="evidence" value="ECO:0000266"/>
    <property type="project" value="RGD"/>
</dbReference>
<dbReference type="GO" id="GO:0010698">
    <property type="term" value="F:acetyltransferase activator activity"/>
    <property type="evidence" value="ECO:0000318"/>
    <property type="project" value="GO_Central"/>
</dbReference>
<dbReference type="GO" id="GO:0007010">
    <property type="term" value="P:cytoskeleton organization"/>
    <property type="evidence" value="ECO:0000318"/>
    <property type="project" value="GO_Central"/>
</dbReference>
<dbReference type="FunFam" id="1.25.40.1040:FF:000004">
    <property type="entry name" value="N-alpha-acetyltransferase 25, NatB auxiliary subunit"/>
    <property type="match status" value="1"/>
</dbReference>
<dbReference type="Gene3D" id="1.25.40.1040">
    <property type="match status" value="1"/>
</dbReference>
<dbReference type="InterPro" id="IPR019183">
    <property type="entry name" value="NAA25_NatB_aux_su"/>
</dbReference>
<dbReference type="InterPro" id="IPR011990">
    <property type="entry name" value="TPR-like_helical_dom_sf"/>
</dbReference>
<dbReference type="PANTHER" id="PTHR22767:SF3">
    <property type="entry name" value="N-ALPHA-ACETYLTRANSFERASE 25, NATB AUXILIARY SUBUNIT"/>
    <property type="match status" value="1"/>
</dbReference>
<dbReference type="PANTHER" id="PTHR22767">
    <property type="entry name" value="N-TERMINAL ACETYLTRANSFERASE-RELATED"/>
    <property type="match status" value="1"/>
</dbReference>
<dbReference type="Pfam" id="PF09797">
    <property type="entry name" value="NatB_MDM20"/>
    <property type="match status" value="1"/>
</dbReference>
<dbReference type="SUPFAM" id="SSF48452">
    <property type="entry name" value="TPR-like"/>
    <property type="match status" value="1"/>
</dbReference>
<dbReference type="PROSITE" id="PS50293">
    <property type="entry name" value="TPR_REGION"/>
    <property type="match status" value="1"/>
</dbReference>
<keyword id="KW-0963">Cytoplasm</keyword>
<keyword id="KW-1185">Reference proteome</keyword>
<keyword id="KW-0677">Repeat</keyword>
<keyword id="KW-0802">TPR repeat</keyword>
<gene>
    <name type="primary">Naa25</name>
    <name type="synonym">Mdm20</name>
</gene>
<sequence>MATRGHVQDPNDRRLRPIYDYLDNGNNKMAIQQADKLLKKHRDLHCAKVLKAIGLQRTGRQEEAFTLAQEVAALEPTDDNSLQALTILYREMHRPELVTKLYEAAVKKVPNSEEYHSHLFMAYARVGEYKKMQQAGMALYKIVPKNPYYFWSVMSLIMQSISARDENLSKTMFLPLAERMVEKMVKEDKIEAEAEVELYYMILERLGKYQEALDVIRGKLGEKLTSEIQSRENKCMAMYKKLSKWPECNALSRRLLLKNSDDWQFYLTYFDSVFRLIEEAWTPPAEGEHSLEGEVHCSAEDAVKFIEDRITEASQSSRHVRGPHLAKLELIRRLRSQGCNDEFRLGDPEELMFQYFKKFGDKPCCFTDLKVFVDLLPAAQCTQFINQLLGVVPLSTPTEDKLALPADIRGLQQHLCVVQLTRLLGLYHSMDKNQKLDVVRELMLRYQHGLEFGRSCLKTELQFSDYYCLLAVHVLIDIWREAGEETAVWQALTLLEEGLTHSPSNAQFKLLLVRIYCVLGAFEPVVDLYSSLDAKHIQHDTIGYLLTRYAASLGQYAAASQSCNFALRFFHSNQKDTSEYIIQAYKYGAFEKIPEFIAFRNRLNNSLHFAQVRTERMLLDLLLEANISTSLAESIKSMNLRPEEDDVPWEDLRDNRDLDVFFSWDPKDRNVSEEHKKLSLEEETMWLRIRSLTLRLISALPSLTHPVEPRNSEKTSENGVSSRVDVLRLLLQQLEVAVETGKRFIEKEIQYPFLGPVPTRMGRFFSSGCCQCQVHSFHLVSDVYELDTSGLEGTVDIQERIENSLASLLELLKGVFSTCKGDLLEVKDGNVKTQPAVLENLVFFVETISIVLWVSSYCESVLRPYKLNIQKKKKKKKETSIVMPPIFTSFQDYVTGLQTVISNAVDHIKGLEAHLIALKLEELTLEDTSISPVNLSNCHVLSVRRRDPGSYWKLGAVEPMCADVCPSVQI</sequence>
<protein>
    <recommendedName>
        <fullName>N-alpha-acetyltransferase 25, NatB auxiliary subunit</fullName>
    </recommendedName>
    <alternativeName>
        <fullName>Liver regeneration-related protein LRRGT00164</fullName>
    </alternativeName>
    <alternativeName>
        <fullName>Mitochondrial distribution and morphology protein 20</fullName>
    </alternativeName>
    <alternativeName>
        <fullName>N-terminal acetyltransferase B complex subunit MDM20</fullName>
        <shortName>NatB complex subunit MDM20</shortName>
    </alternativeName>
    <alternativeName>
        <fullName>N-terminal acetyltransferase B complex subunit NAA25</fullName>
    </alternativeName>
</protein>
<name>NAA25_RAT</name>
<comment type="function">
    <text evidence="1">Non-catalytic subunit of the NatB complex which catalyzes acetylation of the N-terminal methionine residues of peptides beginning with Met-Asp, Met-Glu, Met-Asn and Met-Gln. May play a role in normal cell-cycle progression.</text>
</comment>
<comment type="subunit">
    <text evidence="1">Component of the N-terminal acetyltransferase B (NatB) complex which is composed of NAA20 and NAA25.</text>
</comment>
<comment type="subcellular location">
    <subcellularLocation>
        <location evidence="1">Cytoplasm</location>
    </subcellularLocation>
</comment>
<comment type="similarity">
    <text evidence="2">Belongs to the MDM20/NAA25 family.</text>
</comment>
<organism>
    <name type="scientific">Rattus norvegicus</name>
    <name type="common">Rat</name>
    <dbReference type="NCBI Taxonomy" id="10116"/>
    <lineage>
        <taxon>Eukaryota</taxon>
        <taxon>Metazoa</taxon>
        <taxon>Chordata</taxon>
        <taxon>Craniata</taxon>
        <taxon>Vertebrata</taxon>
        <taxon>Euteleostomi</taxon>
        <taxon>Mammalia</taxon>
        <taxon>Eutheria</taxon>
        <taxon>Euarchontoglires</taxon>
        <taxon>Glires</taxon>
        <taxon>Rodentia</taxon>
        <taxon>Myomorpha</taxon>
        <taxon>Muroidea</taxon>
        <taxon>Muridae</taxon>
        <taxon>Murinae</taxon>
        <taxon>Rattus</taxon>
    </lineage>
</organism>